<organism>
    <name type="scientific">Sinorhizobium fredii (strain NBRC 101917 / NGR234)</name>
    <dbReference type="NCBI Taxonomy" id="394"/>
    <lineage>
        <taxon>Bacteria</taxon>
        <taxon>Pseudomonadati</taxon>
        <taxon>Pseudomonadota</taxon>
        <taxon>Alphaproteobacteria</taxon>
        <taxon>Hyphomicrobiales</taxon>
        <taxon>Rhizobiaceae</taxon>
        <taxon>Sinorhizobium/Ensifer group</taxon>
        <taxon>Sinorhizobium</taxon>
    </lineage>
</organism>
<evidence type="ECO:0000255" key="1">
    <source>
        <dbReference type="HAMAP-Rule" id="MF_00074"/>
    </source>
</evidence>
<reference key="1">
    <citation type="journal article" date="2009" name="Appl. Environ. Microbiol.">
        <title>Rhizobium sp. strain NGR234 possesses a remarkable number of secretion systems.</title>
        <authorList>
            <person name="Schmeisser C."/>
            <person name="Liesegang H."/>
            <person name="Krysciak D."/>
            <person name="Bakkou N."/>
            <person name="Le Quere A."/>
            <person name="Wollherr A."/>
            <person name="Heinemeyer I."/>
            <person name="Morgenstern B."/>
            <person name="Pommerening-Roeser A."/>
            <person name="Flores M."/>
            <person name="Palacios R."/>
            <person name="Brenner S."/>
            <person name="Gottschalk G."/>
            <person name="Schmitz R.A."/>
            <person name="Broughton W.J."/>
            <person name="Perret X."/>
            <person name="Strittmatter A.W."/>
            <person name="Streit W.R."/>
        </authorList>
    </citation>
    <scope>NUCLEOTIDE SEQUENCE [LARGE SCALE GENOMIC DNA]</scope>
    <source>
        <strain>NBRC 101917 / NGR234</strain>
    </source>
</reference>
<protein>
    <recommendedName>
        <fullName evidence="1">Ribosomal RNA small subunit methyltransferase G</fullName>
        <ecNumber evidence="1">2.1.1.170</ecNumber>
    </recommendedName>
    <alternativeName>
        <fullName evidence="1">16S rRNA 7-methylguanosine methyltransferase</fullName>
        <shortName evidence="1">16S rRNA m7G methyltransferase</shortName>
    </alternativeName>
</protein>
<name>RSMG_SINFN</name>
<dbReference type="EC" id="2.1.1.170" evidence="1"/>
<dbReference type="EMBL" id="CP001389">
    <property type="protein sequence ID" value="ACP27074.1"/>
    <property type="molecule type" value="Genomic_DNA"/>
</dbReference>
<dbReference type="RefSeq" id="WP_012709821.1">
    <property type="nucleotide sequence ID" value="NC_012587.1"/>
</dbReference>
<dbReference type="RefSeq" id="YP_002827827.1">
    <property type="nucleotide sequence ID" value="NC_012587.1"/>
</dbReference>
<dbReference type="SMR" id="C3MB65"/>
<dbReference type="STRING" id="394.NGR_c33440"/>
<dbReference type="KEGG" id="rhi:NGR_c33440"/>
<dbReference type="PATRIC" id="fig|394.7.peg.6189"/>
<dbReference type="eggNOG" id="COG0357">
    <property type="taxonomic scope" value="Bacteria"/>
</dbReference>
<dbReference type="HOGENOM" id="CLU_065341_1_1_5"/>
<dbReference type="OrthoDB" id="9808773at2"/>
<dbReference type="Proteomes" id="UP000001054">
    <property type="component" value="Chromosome"/>
</dbReference>
<dbReference type="GO" id="GO:0005829">
    <property type="term" value="C:cytosol"/>
    <property type="evidence" value="ECO:0007669"/>
    <property type="project" value="TreeGrafter"/>
</dbReference>
<dbReference type="GO" id="GO:0070043">
    <property type="term" value="F:rRNA (guanine-N7-)-methyltransferase activity"/>
    <property type="evidence" value="ECO:0007669"/>
    <property type="project" value="UniProtKB-UniRule"/>
</dbReference>
<dbReference type="Gene3D" id="3.40.50.150">
    <property type="entry name" value="Vaccinia Virus protein VP39"/>
    <property type="match status" value="1"/>
</dbReference>
<dbReference type="HAMAP" id="MF_00074">
    <property type="entry name" value="16SrRNA_methyltr_G"/>
    <property type="match status" value="1"/>
</dbReference>
<dbReference type="InterPro" id="IPR003682">
    <property type="entry name" value="rRNA_ssu_MeTfrase_G"/>
</dbReference>
<dbReference type="InterPro" id="IPR029063">
    <property type="entry name" value="SAM-dependent_MTases_sf"/>
</dbReference>
<dbReference type="NCBIfam" id="TIGR00138">
    <property type="entry name" value="rsmG_gidB"/>
    <property type="match status" value="1"/>
</dbReference>
<dbReference type="PANTHER" id="PTHR31760">
    <property type="entry name" value="S-ADENOSYL-L-METHIONINE-DEPENDENT METHYLTRANSFERASES SUPERFAMILY PROTEIN"/>
    <property type="match status" value="1"/>
</dbReference>
<dbReference type="PANTHER" id="PTHR31760:SF0">
    <property type="entry name" value="S-ADENOSYL-L-METHIONINE-DEPENDENT METHYLTRANSFERASES SUPERFAMILY PROTEIN"/>
    <property type="match status" value="1"/>
</dbReference>
<dbReference type="Pfam" id="PF02527">
    <property type="entry name" value="GidB"/>
    <property type="match status" value="1"/>
</dbReference>
<dbReference type="PIRSF" id="PIRSF003078">
    <property type="entry name" value="GidB"/>
    <property type="match status" value="1"/>
</dbReference>
<dbReference type="SUPFAM" id="SSF53335">
    <property type="entry name" value="S-adenosyl-L-methionine-dependent methyltransferases"/>
    <property type="match status" value="1"/>
</dbReference>
<feature type="chain" id="PRO_1000118196" description="Ribosomal RNA small subunit methyltransferase G">
    <location>
        <begin position="1"/>
        <end position="214"/>
    </location>
</feature>
<feature type="binding site" evidence="1">
    <location>
        <position position="72"/>
    </location>
    <ligand>
        <name>S-adenosyl-L-methionine</name>
        <dbReference type="ChEBI" id="CHEBI:59789"/>
    </ligand>
</feature>
<feature type="binding site" evidence="1">
    <location>
        <position position="77"/>
    </location>
    <ligand>
        <name>S-adenosyl-L-methionine</name>
        <dbReference type="ChEBI" id="CHEBI:59789"/>
    </ligand>
</feature>
<feature type="binding site" evidence="1">
    <location>
        <begin position="125"/>
        <end position="126"/>
    </location>
    <ligand>
        <name>S-adenosyl-L-methionine</name>
        <dbReference type="ChEBI" id="CHEBI:59789"/>
    </ligand>
</feature>
<feature type="binding site" evidence="1">
    <location>
        <position position="141"/>
    </location>
    <ligand>
        <name>S-adenosyl-L-methionine</name>
        <dbReference type="ChEBI" id="CHEBI:59789"/>
    </ligand>
</feature>
<accession>C3MB65</accession>
<sequence length="214" mass="23827">MNASPAERMKALRVSRETLDKLEHFAGLFQKWAKSINLVAPSTLEDLWQRHFVDSLQVFRLSPFPKTWVDLGSGGGFPGVITAICLSEHADGWVHLVESNNKKAAFLRVALNETGARGSVHPIRVEQAPSVIPRCEAISARALADLTQLLDYSAPWMLADGSNTIAFFHKGRDYQQEVDKAVSRFQFDLVKHASVVEQDSVVLEIANLSRRTKC</sequence>
<comment type="function">
    <text evidence="1">Specifically methylates the N7 position of guanine in position 527 of 16S rRNA.</text>
</comment>
<comment type="catalytic activity">
    <reaction evidence="1">
        <text>guanosine(527) in 16S rRNA + S-adenosyl-L-methionine = N(7)-methylguanosine(527) in 16S rRNA + S-adenosyl-L-homocysteine</text>
        <dbReference type="Rhea" id="RHEA:42732"/>
        <dbReference type="Rhea" id="RHEA-COMP:10209"/>
        <dbReference type="Rhea" id="RHEA-COMP:10210"/>
        <dbReference type="ChEBI" id="CHEBI:57856"/>
        <dbReference type="ChEBI" id="CHEBI:59789"/>
        <dbReference type="ChEBI" id="CHEBI:74269"/>
        <dbReference type="ChEBI" id="CHEBI:74480"/>
        <dbReference type="EC" id="2.1.1.170"/>
    </reaction>
</comment>
<comment type="subcellular location">
    <subcellularLocation>
        <location evidence="1">Cytoplasm</location>
    </subcellularLocation>
</comment>
<comment type="similarity">
    <text evidence="1">Belongs to the methyltransferase superfamily. RNA methyltransferase RsmG family.</text>
</comment>
<keyword id="KW-0963">Cytoplasm</keyword>
<keyword id="KW-0489">Methyltransferase</keyword>
<keyword id="KW-1185">Reference proteome</keyword>
<keyword id="KW-0698">rRNA processing</keyword>
<keyword id="KW-0949">S-adenosyl-L-methionine</keyword>
<keyword id="KW-0808">Transferase</keyword>
<proteinExistence type="inferred from homology"/>
<gene>
    <name evidence="1" type="primary">rsmG</name>
    <name type="ordered locus">NGR_c33440</name>
</gene>